<evidence type="ECO:0000250" key="1"/>
<evidence type="ECO:0000255" key="2"/>
<evidence type="ECO:0000255" key="3">
    <source>
        <dbReference type="PROSITE-ProRule" id="PRU01058"/>
    </source>
</evidence>
<evidence type="ECO:0000256" key="4">
    <source>
        <dbReference type="SAM" id="MobiDB-lite"/>
    </source>
</evidence>
<reference key="1">
    <citation type="journal article" date="2004" name="Nature">
        <title>Genome evolution in yeasts.</title>
        <authorList>
            <person name="Dujon B."/>
            <person name="Sherman D."/>
            <person name="Fischer G."/>
            <person name="Durrens P."/>
            <person name="Casaregola S."/>
            <person name="Lafontaine I."/>
            <person name="de Montigny J."/>
            <person name="Marck C."/>
            <person name="Neuveglise C."/>
            <person name="Talla E."/>
            <person name="Goffard N."/>
            <person name="Frangeul L."/>
            <person name="Aigle M."/>
            <person name="Anthouard V."/>
            <person name="Babour A."/>
            <person name="Barbe V."/>
            <person name="Barnay S."/>
            <person name="Blanchin S."/>
            <person name="Beckerich J.-M."/>
            <person name="Beyne E."/>
            <person name="Bleykasten C."/>
            <person name="Boisrame A."/>
            <person name="Boyer J."/>
            <person name="Cattolico L."/>
            <person name="Confanioleri F."/>
            <person name="de Daruvar A."/>
            <person name="Despons L."/>
            <person name="Fabre E."/>
            <person name="Fairhead C."/>
            <person name="Ferry-Dumazet H."/>
            <person name="Groppi A."/>
            <person name="Hantraye F."/>
            <person name="Hennequin C."/>
            <person name="Jauniaux N."/>
            <person name="Joyet P."/>
            <person name="Kachouri R."/>
            <person name="Kerrest A."/>
            <person name="Koszul R."/>
            <person name="Lemaire M."/>
            <person name="Lesur I."/>
            <person name="Ma L."/>
            <person name="Muller H."/>
            <person name="Nicaud J.-M."/>
            <person name="Nikolski M."/>
            <person name="Oztas S."/>
            <person name="Ozier-Kalogeropoulos O."/>
            <person name="Pellenz S."/>
            <person name="Potier S."/>
            <person name="Richard G.-F."/>
            <person name="Straub M.-L."/>
            <person name="Suleau A."/>
            <person name="Swennen D."/>
            <person name="Tekaia F."/>
            <person name="Wesolowski-Louvel M."/>
            <person name="Westhof E."/>
            <person name="Wirth B."/>
            <person name="Zeniou-Meyer M."/>
            <person name="Zivanovic Y."/>
            <person name="Bolotin-Fukuhara M."/>
            <person name="Thierry A."/>
            <person name="Bouchier C."/>
            <person name="Caudron B."/>
            <person name="Scarpelli C."/>
            <person name="Gaillardin C."/>
            <person name="Weissenbach J."/>
            <person name="Wincker P."/>
            <person name="Souciet J.-L."/>
        </authorList>
    </citation>
    <scope>NUCLEOTIDE SEQUENCE [LARGE SCALE GENOMIC DNA]</scope>
    <source>
        <strain>CLIB 122 / E 150</strain>
    </source>
</reference>
<accession>Q6C036</accession>
<dbReference type="EMBL" id="CR382132">
    <property type="protein sequence ID" value="CAG78788.1"/>
    <property type="molecule type" value="Genomic_DNA"/>
</dbReference>
<dbReference type="RefSeq" id="XP_505976.1">
    <property type="nucleotide sequence ID" value="XM_505976.1"/>
</dbReference>
<dbReference type="SMR" id="Q6C036"/>
<dbReference type="FunCoup" id="Q6C036">
    <property type="interactions" value="880"/>
</dbReference>
<dbReference type="STRING" id="284591.Q6C036"/>
<dbReference type="EnsemblFungi" id="CAG78788">
    <property type="protein sequence ID" value="CAG78788"/>
    <property type="gene ID" value="YALI0_F28083g"/>
</dbReference>
<dbReference type="KEGG" id="yli:2908104"/>
<dbReference type="VEuPathDB" id="FungiDB:YALI0_F28083g"/>
<dbReference type="HOGENOM" id="CLU_011106_4_0_1"/>
<dbReference type="InParanoid" id="Q6C036"/>
<dbReference type="OMA" id="KNPEDHI"/>
<dbReference type="OrthoDB" id="114842at4891"/>
<dbReference type="Proteomes" id="UP000001300">
    <property type="component" value="Chromosome F"/>
</dbReference>
<dbReference type="GO" id="GO:0005730">
    <property type="term" value="C:nucleolus"/>
    <property type="evidence" value="ECO:0000318"/>
    <property type="project" value="GO_Central"/>
</dbReference>
<dbReference type="GO" id="GO:0005525">
    <property type="term" value="F:GTP binding"/>
    <property type="evidence" value="ECO:0007669"/>
    <property type="project" value="UniProtKB-KW"/>
</dbReference>
<dbReference type="GO" id="GO:0042254">
    <property type="term" value="P:ribosome biogenesis"/>
    <property type="evidence" value="ECO:0007669"/>
    <property type="project" value="UniProtKB-KW"/>
</dbReference>
<dbReference type="CDD" id="cd01858">
    <property type="entry name" value="NGP_1"/>
    <property type="match status" value="1"/>
</dbReference>
<dbReference type="FunFam" id="3.40.50.300:FF:000559">
    <property type="entry name" value="Nuclear/nucleolar GTPase 2"/>
    <property type="match status" value="1"/>
</dbReference>
<dbReference type="FunFam" id="1.10.1580.10:FF:000005">
    <property type="entry name" value="Nucleolar GTP-binding protein 2"/>
    <property type="match status" value="1"/>
</dbReference>
<dbReference type="Gene3D" id="1.10.1580.10">
    <property type="match status" value="1"/>
</dbReference>
<dbReference type="Gene3D" id="3.40.50.300">
    <property type="entry name" value="P-loop containing nucleotide triphosphate hydrolases"/>
    <property type="match status" value="1"/>
</dbReference>
<dbReference type="InterPro" id="IPR030378">
    <property type="entry name" value="G_CP_dom"/>
</dbReference>
<dbReference type="InterPro" id="IPR024929">
    <property type="entry name" value="GNL2_CP_dom"/>
</dbReference>
<dbReference type="InterPro" id="IPR006073">
    <property type="entry name" value="GTP-bd"/>
</dbReference>
<dbReference type="InterPro" id="IPR023179">
    <property type="entry name" value="GTP-bd_ortho_bundle_sf"/>
</dbReference>
<dbReference type="InterPro" id="IPR012971">
    <property type="entry name" value="NOG2_N_dom"/>
</dbReference>
<dbReference type="InterPro" id="IPR027417">
    <property type="entry name" value="P-loop_NTPase"/>
</dbReference>
<dbReference type="InterPro" id="IPR050755">
    <property type="entry name" value="TRAFAC_YlqF/YawG_RiboMat"/>
</dbReference>
<dbReference type="PANTHER" id="PTHR11089">
    <property type="entry name" value="GTP-BINDING PROTEIN-RELATED"/>
    <property type="match status" value="1"/>
</dbReference>
<dbReference type="PANTHER" id="PTHR11089:SF9">
    <property type="entry name" value="NUCLEOLAR GTP-BINDING PROTEIN 2"/>
    <property type="match status" value="1"/>
</dbReference>
<dbReference type="Pfam" id="PF01926">
    <property type="entry name" value="MMR_HSR1"/>
    <property type="match status" value="1"/>
</dbReference>
<dbReference type="Pfam" id="PF08153">
    <property type="entry name" value="NGP1NT"/>
    <property type="match status" value="1"/>
</dbReference>
<dbReference type="PRINTS" id="PR00326">
    <property type="entry name" value="GTP1OBG"/>
</dbReference>
<dbReference type="SUPFAM" id="SSF52540">
    <property type="entry name" value="P-loop containing nucleoside triphosphate hydrolases"/>
    <property type="match status" value="1"/>
</dbReference>
<dbReference type="PROSITE" id="PS51721">
    <property type="entry name" value="G_CP"/>
    <property type="match status" value="1"/>
</dbReference>
<gene>
    <name type="primary">NOG2</name>
    <name type="ordered locus">YALI0F28083g</name>
</gene>
<feature type="chain" id="PRO_0000215816" description="Nucleolar GTP-binding protein 2">
    <location>
        <begin position="1"/>
        <end position="509"/>
    </location>
</feature>
<feature type="domain" description="CP-type G" evidence="3">
    <location>
        <begin position="204"/>
        <end position="365"/>
    </location>
</feature>
<feature type="region of interest" description="Disordered" evidence="4">
    <location>
        <begin position="1"/>
        <end position="22"/>
    </location>
</feature>
<feature type="region of interest" description="Disordered" evidence="4">
    <location>
        <begin position="480"/>
        <end position="509"/>
    </location>
</feature>
<feature type="compositionally biased region" description="Basic and acidic residues" evidence="4">
    <location>
        <begin position="1"/>
        <end position="14"/>
    </location>
</feature>
<feature type="binding site" evidence="2">
    <location>
        <begin position="314"/>
        <end position="321"/>
    </location>
    <ligand>
        <name>GTP</name>
        <dbReference type="ChEBI" id="CHEBI:37565"/>
    </ligand>
</feature>
<feature type="binding site" evidence="2">
    <location>
        <begin position="358"/>
        <end position="362"/>
    </location>
    <ligand>
        <name>GTP</name>
        <dbReference type="ChEBI" id="CHEBI:37565"/>
    </ligand>
</feature>
<organism>
    <name type="scientific">Yarrowia lipolytica (strain CLIB 122 / E 150)</name>
    <name type="common">Yeast</name>
    <name type="synonym">Candida lipolytica</name>
    <dbReference type="NCBI Taxonomy" id="284591"/>
    <lineage>
        <taxon>Eukaryota</taxon>
        <taxon>Fungi</taxon>
        <taxon>Dikarya</taxon>
        <taxon>Ascomycota</taxon>
        <taxon>Saccharomycotina</taxon>
        <taxon>Dipodascomycetes</taxon>
        <taxon>Dipodascales</taxon>
        <taxon>Dipodascales incertae sedis</taxon>
        <taxon>Yarrowia</taxon>
    </lineage>
</organism>
<keyword id="KW-0342">GTP-binding</keyword>
<keyword id="KW-0547">Nucleotide-binding</keyword>
<keyword id="KW-0539">Nucleus</keyword>
<keyword id="KW-1185">Reference proteome</keyword>
<keyword id="KW-0690">Ribosome biogenesis</keyword>
<comment type="function">
    <text evidence="1">GTPase that associates with pre-60S ribosomal subunits in the nucleolus and is required for their nuclear export and maturation.</text>
</comment>
<comment type="subcellular location">
    <subcellularLocation>
        <location evidence="1">Nucleus</location>
        <location evidence="1">Nucleolus</location>
    </subcellularLocation>
</comment>
<comment type="similarity">
    <text evidence="3">Belongs to the TRAFAC class YlqF/YawG GTPase family. NOG2 subfamily.</text>
</comment>
<name>NOG2_YARLI</name>
<sequence length="509" mass="57650">MGTGKKEATRRAKGGETGNGFGNIRVKGVNFYRDAKKVKKLSMYKEGRAKHNARGEEVQAATFQSKEIPNARIDPNRRWFGNTRVIAQDALNHFREALGETKRDSYQVLLRQNKLPMSLLEENNKIPQVKVVETESYANTFGPKAQRKKPQLAVGDFAELASAADESQQDFEAKKEEDNSWKVDGWSQEAKEAIFHKGQSKRIWNELYKVIDSSDVVIHVLDARDPLGTRCTSVEQYIKKEAPHKHLIFVLNKCDLVPTWVAAAWVKHLSQDYPTLAFHASITNSFGKGSLIQLLRQYSALHPDRQQISVGFIGYPNTGKSSIINTLRKKKVCKTAPIPGETKVWQYITLMKRIFLIDCPGIVPPSQKDSETDILFRGVVRVEHVSYPEQYIPALLERCETKHLERTYEVSGWSNATEFLEKIARKHGRLLKGGEPDESGIAKLILNDFNRGKIPWFVPPPQAEDMENVKFAAGEGRLGEMKKREIHEAPAATETAEETKEEEFKGFDD</sequence>
<protein>
    <recommendedName>
        <fullName>Nucleolar GTP-binding protein 2</fullName>
    </recommendedName>
</protein>
<proteinExistence type="inferred from homology"/>